<accession>P0AB46</accession>
<accession>P75998</accession>
<keyword id="KW-0002">3D-structure</keyword>
<keyword id="KW-1185">Reference proteome</keyword>
<keyword id="KW-0732">Signal</keyword>
<evidence type="ECO:0000255" key="1"/>
<evidence type="ECO:0007829" key="2">
    <source>
        <dbReference type="PDB" id="2LRM"/>
    </source>
</evidence>
<organism>
    <name type="scientific">Escherichia coli (strain K12)</name>
    <dbReference type="NCBI Taxonomy" id="83333"/>
    <lineage>
        <taxon>Bacteria</taxon>
        <taxon>Pseudomonadati</taxon>
        <taxon>Pseudomonadota</taxon>
        <taxon>Gammaproteobacteria</taxon>
        <taxon>Enterobacterales</taxon>
        <taxon>Enterobacteriaceae</taxon>
        <taxon>Escherichia</taxon>
    </lineage>
</organism>
<proteinExistence type="evidence at protein level"/>
<protein>
    <recommendedName>
        <fullName>Uncharacterized protein YmgD</fullName>
    </recommendedName>
</protein>
<sequence length="109" mass="11852">MKKFALLAGLFVFAPMTWAQDYNIKNGLPSETYITCAEANEMAKTDSAQVAEIVAVMGNASVASRDLKIEQSPELSAKVVEKLNQVCAKDPQMLLITAIDDTMRAIGKK</sequence>
<name>YMGD_ECOLI</name>
<dbReference type="EMBL" id="U00096">
    <property type="protein sequence ID" value="AAC74255.2"/>
    <property type="molecule type" value="Genomic_DNA"/>
</dbReference>
<dbReference type="EMBL" id="AP009048">
    <property type="protein sequence ID" value="BAA36005.2"/>
    <property type="molecule type" value="Genomic_DNA"/>
</dbReference>
<dbReference type="PIR" id="H64862">
    <property type="entry name" value="H64862"/>
</dbReference>
<dbReference type="RefSeq" id="NP_415689.2">
    <property type="nucleotide sequence ID" value="NC_000913.3"/>
</dbReference>
<dbReference type="PDB" id="2LRM">
    <property type="method" value="NMR"/>
    <property type="chains" value="A/B=20-109"/>
</dbReference>
<dbReference type="PDB" id="2LRV">
    <property type="method" value="NMR"/>
    <property type="chains" value="A=20-109"/>
</dbReference>
<dbReference type="PDBsum" id="2LRM"/>
<dbReference type="PDBsum" id="2LRV"/>
<dbReference type="BMRB" id="P0AB46"/>
<dbReference type="SMR" id="P0AB46"/>
<dbReference type="BioGRID" id="4260096">
    <property type="interactions" value="10"/>
</dbReference>
<dbReference type="DIP" id="DIP-48276N"/>
<dbReference type="FunCoup" id="P0AB46">
    <property type="interactions" value="66"/>
</dbReference>
<dbReference type="STRING" id="511145.b1171"/>
<dbReference type="jPOST" id="P0AB46"/>
<dbReference type="PaxDb" id="511145-b1171"/>
<dbReference type="EnsemblBacteria" id="AAC74255">
    <property type="protein sequence ID" value="AAC74255"/>
    <property type="gene ID" value="b1171"/>
</dbReference>
<dbReference type="GeneID" id="945732"/>
<dbReference type="KEGG" id="ecj:JW5177"/>
<dbReference type="KEGG" id="eco:b1171"/>
<dbReference type="KEGG" id="ecoc:C3026_06900"/>
<dbReference type="PATRIC" id="fig|511145.12.peg.1213"/>
<dbReference type="EchoBASE" id="EB4040"/>
<dbReference type="eggNOG" id="ENOG5032WSV">
    <property type="taxonomic scope" value="Bacteria"/>
</dbReference>
<dbReference type="HOGENOM" id="CLU_2194528_0_0_6"/>
<dbReference type="InParanoid" id="P0AB46"/>
<dbReference type="OMA" id="TTCTEAN"/>
<dbReference type="OrthoDB" id="6571270at2"/>
<dbReference type="BioCyc" id="EcoCyc:G6611-MONOMER"/>
<dbReference type="EvolutionaryTrace" id="P0AB46"/>
<dbReference type="PRO" id="PR:P0AB46"/>
<dbReference type="Proteomes" id="UP000000625">
    <property type="component" value="Chromosome"/>
</dbReference>
<dbReference type="GO" id="GO:0030288">
    <property type="term" value="C:outer membrane-bounded periplasmic space"/>
    <property type="evidence" value="ECO:0000304"/>
    <property type="project" value="EcoCyc"/>
</dbReference>
<dbReference type="Gene3D" id="1.10.890.30">
    <property type="entry name" value="YmgD protein"/>
    <property type="match status" value="1"/>
</dbReference>
<dbReference type="InterPro" id="IPR032497">
    <property type="entry name" value="YmgD"/>
</dbReference>
<dbReference type="InterPro" id="IPR038304">
    <property type="entry name" value="YmgD_sf"/>
</dbReference>
<dbReference type="Pfam" id="PF16456">
    <property type="entry name" value="YmgD"/>
    <property type="match status" value="1"/>
</dbReference>
<gene>
    <name type="primary">ymgD</name>
    <name type="ordered locus">b1171</name>
    <name type="ordered locus">JW5177</name>
</gene>
<reference key="1">
    <citation type="journal article" date="1996" name="DNA Res.">
        <title>A 718-kb DNA sequence of the Escherichia coli K-12 genome corresponding to the 12.7-28.0 min region on the linkage map.</title>
        <authorList>
            <person name="Oshima T."/>
            <person name="Aiba H."/>
            <person name="Baba T."/>
            <person name="Fujita K."/>
            <person name="Hayashi K."/>
            <person name="Honjo A."/>
            <person name="Ikemoto K."/>
            <person name="Inada T."/>
            <person name="Itoh T."/>
            <person name="Kajihara M."/>
            <person name="Kanai K."/>
            <person name="Kashimoto K."/>
            <person name="Kimura S."/>
            <person name="Kitagawa M."/>
            <person name="Makino K."/>
            <person name="Masuda S."/>
            <person name="Miki T."/>
            <person name="Mizobuchi K."/>
            <person name="Mori H."/>
            <person name="Motomura K."/>
            <person name="Nakamura Y."/>
            <person name="Nashimoto H."/>
            <person name="Nishio Y."/>
            <person name="Saito N."/>
            <person name="Sampei G."/>
            <person name="Seki Y."/>
            <person name="Tagami H."/>
            <person name="Takemoto K."/>
            <person name="Wada C."/>
            <person name="Yamamoto Y."/>
            <person name="Yano M."/>
            <person name="Horiuchi T."/>
        </authorList>
    </citation>
    <scope>NUCLEOTIDE SEQUENCE [LARGE SCALE GENOMIC DNA]</scope>
    <source>
        <strain>K12 / W3110 / ATCC 27325 / DSM 5911</strain>
    </source>
</reference>
<reference key="2">
    <citation type="journal article" date="1997" name="Science">
        <title>The complete genome sequence of Escherichia coli K-12.</title>
        <authorList>
            <person name="Blattner F.R."/>
            <person name="Plunkett G. III"/>
            <person name="Bloch C.A."/>
            <person name="Perna N.T."/>
            <person name="Burland V."/>
            <person name="Riley M."/>
            <person name="Collado-Vides J."/>
            <person name="Glasner J.D."/>
            <person name="Rode C.K."/>
            <person name="Mayhew G.F."/>
            <person name="Gregor J."/>
            <person name="Davis N.W."/>
            <person name="Kirkpatrick H.A."/>
            <person name="Goeden M.A."/>
            <person name="Rose D.J."/>
            <person name="Mau B."/>
            <person name="Shao Y."/>
        </authorList>
    </citation>
    <scope>NUCLEOTIDE SEQUENCE [LARGE SCALE GENOMIC DNA]</scope>
    <source>
        <strain>K12 / MG1655 / ATCC 47076</strain>
    </source>
</reference>
<reference key="3">
    <citation type="journal article" date="2006" name="Mol. Syst. Biol.">
        <title>Highly accurate genome sequences of Escherichia coli K-12 strains MG1655 and W3110.</title>
        <authorList>
            <person name="Hayashi K."/>
            <person name="Morooka N."/>
            <person name="Yamamoto Y."/>
            <person name="Fujita K."/>
            <person name="Isono K."/>
            <person name="Choi S."/>
            <person name="Ohtsubo E."/>
            <person name="Baba T."/>
            <person name="Wanner B.L."/>
            <person name="Mori H."/>
            <person name="Horiuchi T."/>
        </authorList>
    </citation>
    <scope>NUCLEOTIDE SEQUENCE [LARGE SCALE GENOMIC DNA]</scope>
    <source>
        <strain>K12 / W3110 / ATCC 27325 / DSM 5911</strain>
    </source>
</reference>
<feature type="signal peptide" evidence="1">
    <location>
        <begin position="1"/>
        <end position="19"/>
    </location>
</feature>
<feature type="chain" id="PRO_0000013829" description="Uncharacterized protein YmgD">
    <location>
        <begin position="20"/>
        <end position="109"/>
    </location>
</feature>
<feature type="helix" evidence="2">
    <location>
        <begin position="31"/>
        <end position="33"/>
    </location>
</feature>
<feature type="helix" evidence="2">
    <location>
        <begin position="36"/>
        <end position="43"/>
    </location>
</feature>
<feature type="helix" evidence="2">
    <location>
        <begin position="47"/>
        <end position="62"/>
    </location>
</feature>
<feature type="turn" evidence="2">
    <location>
        <begin position="63"/>
        <end position="65"/>
    </location>
</feature>
<feature type="helix" evidence="2">
    <location>
        <begin position="73"/>
        <end position="86"/>
    </location>
</feature>
<feature type="turn" evidence="2">
    <location>
        <begin position="87"/>
        <end position="89"/>
    </location>
</feature>
<feature type="helix" evidence="2">
    <location>
        <begin position="95"/>
        <end position="106"/>
    </location>
</feature>